<dbReference type="EMBL" id="AAFW02000068">
    <property type="protein sequence ID" value="EDN62527.1"/>
    <property type="molecule type" value="Genomic_DNA"/>
</dbReference>
<dbReference type="GlyCosmos" id="A6ZSH9">
    <property type="glycosylation" value="1 site, No reported glycans"/>
</dbReference>
<dbReference type="HOGENOM" id="CLU_2279081_0_0_1"/>
<dbReference type="Proteomes" id="UP000007060">
    <property type="component" value="Unassembled WGS sequence"/>
</dbReference>
<dbReference type="GO" id="GO:0005576">
    <property type="term" value="C:extracellular region"/>
    <property type="evidence" value="ECO:0007669"/>
    <property type="project" value="UniProtKB-KW"/>
</dbReference>
<dbReference type="GO" id="GO:0098552">
    <property type="term" value="C:side of membrane"/>
    <property type="evidence" value="ECO:0007669"/>
    <property type="project" value="UniProtKB-KW"/>
</dbReference>
<dbReference type="CDD" id="cd22955">
    <property type="entry name" value="TOS6"/>
    <property type="match status" value="1"/>
</dbReference>
<evidence type="ECO:0000250" key="1"/>
<evidence type="ECO:0000255" key="2"/>
<evidence type="ECO:0000305" key="3"/>
<proteinExistence type="inferred from homology"/>
<feature type="signal peptide" evidence="2">
    <location>
        <begin position="1"/>
        <end position="18"/>
    </location>
</feature>
<feature type="chain" id="PRO_0000402240" description="Protein TOS6">
    <location>
        <begin position="19"/>
        <end position="80"/>
    </location>
</feature>
<feature type="propeptide" id="PRO_0000402241" description="Removed in mature form" evidence="2">
    <location>
        <begin position="81"/>
        <end position="102"/>
    </location>
</feature>
<feature type="lipid moiety-binding region" description="GPI-anchor amidated glycine" evidence="2">
    <location>
        <position position="80"/>
    </location>
</feature>
<feature type="glycosylation site" description="N-linked (GlcNAc...) asparagine" evidence="2">
    <location>
        <position position="69"/>
    </location>
</feature>
<name>TOS6_YEAS7</name>
<accession>A6ZSH9</accession>
<keyword id="KW-0134">Cell wall</keyword>
<keyword id="KW-0325">Glycoprotein</keyword>
<keyword id="KW-0336">GPI-anchor</keyword>
<keyword id="KW-0449">Lipoprotein</keyword>
<keyword id="KW-0472">Membrane</keyword>
<keyword id="KW-0964">Secreted</keyword>
<keyword id="KW-0732">Signal</keyword>
<comment type="subcellular location">
    <subcellularLocation>
        <location evidence="3">Secreted</location>
        <location evidence="3">Cell wall</location>
    </subcellularLocation>
    <subcellularLocation>
        <location evidence="3">Membrane</location>
        <topology evidence="3">Lipid-anchor</topology>
        <topology evidence="3">GPI-anchor</topology>
    </subcellularLocation>
</comment>
<comment type="PTM">
    <text evidence="1">The GPI-anchor is attached to the protein in the endoplasmic reticulum and serves to target the protein to the cell surface. There, the glucosamine-inositol phospholipid moiety is cleaved off and the GPI-modified mannoprotein is covalently attached via its lipidless GPI glycan remnant to the 1,6-beta-glucan of the outer cell wall layer (By similarity).</text>
</comment>
<comment type="similarity">
    <text evidence="3">Belongs to the TOS6 family.</text>
</comment>
<gene>
    <name type="primary">TOS6</name>
    <name type="ORF">SCY_4890</name>
</gene>
<sequence length="102" mass="10170">MKFSTLSTVAAIAAFASADSTSDGVTYVDVTTTPQSTTSMVSTVKTTSTPYTTSTIATLSTKSISSQANTTTHEISTYVGAAVKGSVAGMGAIMGAAAFALL</sequence>
<reference key="1">
    <citation type="journal article" date="2007" name="Proc. Natl. Acad. Sci. U.S.A.">
        <title>Genome sequencing and comparative analysis of Saccharomyces cerevisiae strain YJM789.</title>
        <authorList>
            <person name="Wei W."/>
            <person name="McCusker J.H."/>
            <person name="Hyman R.W."/>
            <person name="Jones T."/>
            <person name="Ning Y."/>
            <person name="Cao Z."/>
            <person name="Gu Z."/>
            <person name="Bruno D."/>
            <person name="Miranda M."/>
            <person name="Nguyen M."/>
            <person name="Wilhelmy J."/>
            <person name="Komp C."/>
            <person name="Tamse R."/>
            <person name="Wang X."/>
            <person name="Jia P."/>
            <person name="Luedi P."/>
            <person name="Oefner P.J."/>
            <person name="David L."/>
            <person name="Dietrich F.S."/>
            <person name="Li Y."/>
            <person name="Davis R.W."/>
            <person name="Steinmetz L.M."/>
        </authorList>
    </citation>
    <scope>NUCLEOTIDE SEQUENCE [LARGE SCALE GENOMIC DNA]</scope>
    <source>
        <strain>YJM789</strain>
    </source>
</reference>
<protein>
    <recommendedName>
        <fullName>Protein TOS6</fullName>
    </recommendedName>
</protein>
<organism>
    <name type="scientific">Saccharomyces cerevisiae (strain YJM789)</name>
    <name type="common">Baker's yeast</name>
    <dbReference type="NCBI Taxonomy" id="307796"/>
    <lineage>
        <taxon>Eukaryota</taxon>
        <taxon>Fungi</taxon>
        <taxon>Dikarya</taxon>
        <taxon>Ascomycota</taxon>
        <taxon>Saccharomycotina</taxon>
        <taxon>Saccharomycetes</taxon>
        <taxon>Saccharomycetales</taxon>
        <taxon>Saccharomycetaceae</taxon>
        <taxon>Saccharomyces</taxon>
    </lineage>
</organism>